<dbReference type="EMBL" id="U20939">
    <property type="protein sequence ID" value="AAB67507.1"/>
    <property type="molecule type" value="Genomic_DNA"/>
</dbReference>
<dbReference type="EMBL" id="BK006945">
    <property type="protein sequence ID" value="DAA09726.1"/>
    <property type="molecule type" value="Genomic_DNA"/>
</dbReference>
<dbReference type="PIR" id="S53411">
    <property type="entry name" value="S53411"/>
</dbReference>
<dbReference type="RefSeq" id="NP_013528.1">
    <property type="nucleotide sequence ID" value="NM_001182312.1"/>
</dbReference>
<dbReference type="PDB" id="5Y88">
    <property type="method" value="EM"/>
    <property type="resolution" value="3.70 A"/>
    <property type="chains" value="U=1-708"/>
</dbReference>
<dbReference type="PDBsum" id="5Y88"/>
<dbReference type="EMDB" id="EMD-6817"/>
<dbReference type="SMR" id="Q06411"/>
<dbReference type="BioGRID" id="31683">
    <property type="interactions" value="151"/>
</dbReference>
<dbReference type="ComplexPortal" id="CPX-1886">
    <property type="entry name" value="Post-mRNA release spliceosomal complex"/>
</dbReference>
<dbReference type="DIP" id="DIP-1491N"/>
<dbReference type="FunCoup" id="Q06411">
    <property type="interactions" value="1031"/>
</dbReference>
<dbReference type="IntAct" id="Q06411">
    <property type="interactions" value="134"/>
</dbReference>
<dbReference type="MINT" id="Q06411"/>
<dbReference type="STRING" id="4932.YLR424W"/>
<dbReference type="iPTMnet" id="Q06411"/>
<dbReference type="PaxDb" id="4932-YLR424W"/>
<dbReference type="PeptideAtlas" id="Q06411"/>
<dbReference type="EnsemblFungi" id="YLR424W_mRNA">
    <property type="protein sequence ID" value="YLR424W"/>
    <property type="gene ID" value="YLR424W"/>
</dbReference>
<dbReference type="GeneID" id="851143"/>
<dbReference type="KEGG" id="sce:YLR424W"/>
<dbReference type="AGR" id="SGD:S000004416"/>
<dbReference type="SGD" id="S000004416">
    <property type="gene designation" value="SPP382"/>
</dbReference>
<dbReference type="VEuPathDB" id="FungiDB:YLR424W"/>
<dbReference type="eggNOG" id="KOG2184">
    <property type="taxonomic scope" value="Eukaryota"/>
</dbReference>
<dbReference type="HOGENOM" id="CLU_434104_0_0_1"/>
<dbReference type="InParanoid" id="Q06411"/>
<dbReference type="OMA" id="NKILYQW"/>
<dbReference type="OrthoDB" id="4822at2759"/>
<dbReference type="BioCyc" id="YEAST:G3O-32484-MONOMER"/>
<dbReference type="BioGRID-ORCS" id="851143">
    <property type="hits" value="3 hits in 10 CRISPR screens"/>
</dbReference>
<dbReference type="PRO" id="PR:Q06411"/>
<dbReference type="Proteomes" id="UP000002311">
    <property type="component" value="Chromosome XII"/>
</dbReference>
<dbReference type="RNAct" id="Q06411">
    <property type="molecule type" value="protein"/>
</dbReference>
<dbReference type="GO" id="GO:0000781">
    <property type="term" value="C:chromosome, telomeric region"/>
    <property type="evidence" value="ECO:0000314"/>
    <property type="project" value="BHF-UCL"/>
</dbReference>
<dbReference type="GO" id="GO:0005737">
    <property type="term" value="C:cytoplasm"/>
    <property type="evidence" value="ECO:0007005"/>
    <property type="project" value="SGD"/>
</dbReference>
<dbReference type="GO" id="GO:0005739">
    <property type="term" value="C:mitochondrion"/>
    <property type="evidence" value="ECO:0007005"/>
    <property type="project" value="SGD"/>
</dbReference>
<dbReference type="GO" id="GO:0005730">
    <property type="term" value="C:nucleolus"/>
    <property type="evidence" value="ECO:0000314"/>
    <property type="project" value="BHF-UCL"/>
</dbReference>
<dbReference type="GO" id="GO:0005634">
    <property type="term" value="C:nucleus"/>
    <property type="evidence" value="ECO:0007005"/>
    <property type="project" value="SGD"/>
</dbReference>
<dbReference type="GO" id="GO:0071008">
    <property type="term" value="C:U2-type post-mRNA release spliceosomal complex"/>
    <property type="evidence" value="ECO:0000314"/>
    <property type="project" value="SGD"/>
</dbReference>
<dbReference type="GO" id="GO:0003676">
    <property type="term" value="F:nucleic acid binding"/>
    <property type="evidence" value="ECO:0007669"/>
    <property type="project" value="InterPro"/>
</dbReference>
<dbReference type="GO" id="GO:0000349">
    <property type="term" value="P:generation of catalytic spliceosome for first transesterification step"/>
    <property type="evidence" value="ECO:0000315"/>
    <property type="project" value="SGD"/>
</dbReference>
<dbReference type="GO" id="GO:2001033">
    <property type="term" value="P:negative regulation of double-strand break repair via nonhomologous end joining"/>
    <property type="evidence" value="ECO:0000315"/>
    <property type="project" value="BHF-UCL"/>
</dbReference>
<dbReference type="GO" id="GO:0000390">
    <property type="term" value="P:spliceosomal complex disassembly"/>
    <property type="evidence" value="ECO:0000314"/>
    <property type="project" value="SGD"/>
</dbReference>
<dbReference type="InterPro" id="IPR000467">
    <property type="entry name" value="G_patch_dom"/>
</dbReference>
<dbReference type="InterPro" id="IPR045211">
    <property type="entry name" value="TFP11/STIP/Ntr1"/>
</dbReference>
<dbReference type="PANTHER" id="PTHR23329:SF1">
    <property type="entry name" value="TUFTELIN-INTERACTING PROTEIN 11"/>
    <property type="match status" value="1"/>
</dbReference>
<dbReference type="PANTHER" id="PTHR23329">
    <property type="entry name" value="TUFTELIN-INTERACTING PROTEIN 11-RELATED"/>
    <property type="match status" value="1"/>
</dbReference>
<dbReference type="Pfam" id="PF01585">
    <property type="entry name" value="G-patch"/>
    <property type="match status" value="1"/>
</dbReference>
<dbReference type="SMART" id="SM00443">
    <property type="entry name" value="G_patch"/>
    <property type="match status" value="1"/>
</dbReference>
<dbReference type="PROSITE" id="PS50174">
    <property type="entry name" value="G_PATCH"/>
    <property type="match status" value="1"/>
</dbReference>
<name>SP382_YEAST</name>
<keyword id="KW-0002">3D-structure</keyword>
<keyword id="KW-0963">Cytoplasm</keyword>
<keyword id="KW-0507">mRNA processing</keyword>
<keyword id="KW-0508">mRNA splicing</keyword>
<keyword id="KW-0539">Nucleus</keyword>
<keyword id="KW-1185">Reference proteome</keyword>
<keyword id="KW-0747">Spliceosome</keyword>
<comment type="function">
    <text evidence="6 7">Involved in pre-mRNA splicing and spliceosome disassembly. Promotes release of excised lariat intron from the spliceosome by acting as a receptor for PRP43. This targeting of PRP43 leads to disassembly of the spliceosome with the separation of the U2, U5, U6 snRNPs and the NTC complex.</text>
</comment>
<comment type="subunit">
    <text evidence="2 5 6 7">Component of the NTR complex (NTC-related complex), composed of NTR1, NTR2 and PRP43. Interacts with CLF1 and NTR2. Interacts with PRP43 and PRP45.</text>
</comment>
<comment type="interaction">
    <interactant intactId="EBI-576">
        <id>Q06411</id>
    </interactant>
    <interactant intactId="EBI-476">
        <id>Q03654</id>
        <label>CEF1</label>
    </interactant>
    <organismsDiffer>false</organismsDiffer>
    <experiments>3</experiments>
</comment>
<comment type="interaction">
    <interactant intactId="EBI-576">
        <id>Q06411</id>
    </interactant>
    <interactant intactId="EBI-560">
        <id>P52868</id>
        <label>CWC23</label>
    </interactant>
    <organismsDiffer>false</organismsDiffer>
    <experiments>7</experiments>
</comment>
<comment type="interaction">
    <interactant intactId="EBI-576">
        <id>Q06411</id>
    </interactant>
    <interactant intactId="EBI-26362">
        <id>P36118</id>
        <label>NTR2</label>
    </interactant>
    <organismsDiffer>false</organismsDiffer>
    <experiments>11</experiments>
</comment>
<comment type="interaction">
    <interactant intactId="EBI-576">
        <id>Q06411</id>
    </interactant>
    <interactant intactId="EBI-505">
        <id>P53131</id>
        <label>PRP43</label>
    </interactant>
    <organismsDiffer>false</organismsDiffer>
    <experiments>12</experiments>
</comment>
<comment type="subcellular location">
    <subcellularLocation>
        <location evidence="3">Cytoplasm</location>
    </subcellularLocation>
    <subcellularLocation>
        <location evidence="3">Nucleus</location>
    </subcellularLocation>
</comment>
<comment type="miscellaneous">
    <text evidence="4">Present with 556 molecules/cell in log phase SD medium.</text>
</comment>
<evidence type="ECO:0000255" key="1">
    <source>
        <dbReference type="PROSITE-ProRule" id="PRU00092"/>
    </source>
</evidence>
<evidence type="ECO:0000269" key="2">
    <source>
    </source>
</evidence>
<evidence type="ECO:0000269" key="3">
    <source>
    </source>
</evidence>
<evidence type="ECO:0000269" key="4">
    <source>
    </source>
</evidence>
<evidence type="ECO:0000269" key="5">
    <source>
    </source>
</evidence>
<evidence type="ECO:0000269" key="6">
    <source>
    </source>
</evidence>
<evidence type="ECO:0000269" key="7">
    <source>
    </source>
</evidence>
<evidence type="ECO:0007829" key="8">
    <source>
        <dbReference type="PDB" id="5Y88"/>
    </source>
</evidence>
<sequence>MEDSDSNTDKKFFFKKRRIDSYNYSDEEDNNSSMNSDMTYTNDALKTSSGNAPTISKLTKTYGIGAKLLSSMGYVAGKGLGKDGSGITTPIETQSRPMHNAGLGMFSNTNSSNYHSENEDYLSSEDEVVEGIEQVKFNKTSTEVLGEALLNDSGDMTIVRTLRELRLAGVQLPESILKELDPLNAVPKPKKDVVVEILQELLGIEKSLEAIRQRTSPLEVQVKEYYGQERLLSELEVTLRDESKHVSLYDKIGAILKLSDDELIDRLTSCLLRKELLIEFDLDHLEKPNDILDELTQIIELLAYRMDTTSKFLNRTQTTIFKVIYPKLKKFWEGFDMTKSKIDSAITLLLDFQQVLSFIGCKEHIMEEFVYPKLLQELDNWELHDEVDHVSPRIWVLDFMVLIDDKIKDTIVDKIEAKFFAYCKNWYHRESFCITNSDIIFIKELICERRYYKILCKEFLPKFLDELWERHNDPIYELEDWKEKQEWKEKDSGFFYFMKKLRSYTHYFHPKQYELMMRGTFNNINKILYQWHLYSTVEDLHKSKWWLNWLMNTVFEHSLPTEIELSEIRKSYNIFAMSHRYHLDKSTLDEDFDLRQGLRNLMETQVIDDISQSEQEPTYTVQNIPLGKVSSSFKDVVEDYCLEKGYLISKIPNRYTQLPYGRDQDCIVPLFEIRNGKKKMEVALKHDILWVEDSSGTFKPIYLWALDL</sequence>
<feature type="chain" id="PRO_0000270560" description="Pre-mRNA-splicing factor SPP382">
    <location>
        <begin position="1"/>
        <end position="708"/>
    </location>
</feature>
<feature type="domain" description="G-patch" evidence="1">
    <location>
        <begin position="61"/>
        <end position="108"/>
    </location>
</feature>
<feature type="helix" evidence="8">
    <location>
        <begin position="85"/>
        <end position="128"/>
    </location>
</feature>
<feature type="helix" evidence="8">
    <location>
        <begin position="136"/>
        <end position="153"/>
    </location>
</feature>
<feature type="helix" evidence="8">
    <location>
        <begin position="160"/>
        <end position="177"/>
    </location>
</feature>
<feature type="helix" evidence="8">
    <location>
        <begin position="187"/>
        <end position="202"/>
    </location>
</feature>
<feature type="helix" evidence="8">
    <location>
        <begin position="208"/>
        <end position="227"/>
    </location>
</feature>
<feature type="helix" evidence="8">
    <location>
        <begin position="233"/>
        <end position="252"/>
    </location>
</feature>
<feature type="helix" evidence="8">
    <location>
        <begin position="260"/>
        <end position="279"/>
    </location>
</feature>
<feature type="helix" evidence="8">
    <location>
        <begin position="286"/>
        <end position="305"/>
    </location>
</feature>
<feature type="helix" evidence="8">
    <location>
        <begin position="311"/>
        <end position="330"/>
    </location>
</feature>
<feature type="helix" evidence="8">
    <location>
        <begin position="339"/>
        <end position="352"/>
    </location>
</feature>
<feature type="helix" evidence="8">
    <location>
        <begin position="357"/>
        <end position="367"/>
    </location>
</feature>
<feature type="helix" evidence="8">
    <location>
        <begin position="374"/>
        <end position="393"/>
    </location>
</feature>
<feature type="helix" evidence="8">
    <location>
        <begin position="403"/>
        <end position="417"/>
    </location>
</feature>
<feature type="helix" evidence="8">
    <location>
        <begin position="426"/>
        <end position="442"/>
    </location>
</feature>
<feature type="helix" evidence="8">
    <location>
        <begin position="450"/>
        <end position="463"/>
    </location>
</feature>
<feature type="helix" evidence="8">
    <location>
        <begin position="472"/>
        <end position="478"/>
    </location>
</feature>
<feature type="helix" evidence="8">
    <location>
        <begin position="487"/>
        <end position="502"/>
    </location>
</feature>
<feature type="helix" evidence="8">
    <location>
        <begin position="512"/>
        <end position="521"/>
    </location>
</feature>
<feature type="helix" evidence="8">
    <location>
        <begin position="529"/>
        <end position="539"/>
    </location>
</feature>
<feature type="helix" evidence="8">
    <location>
        <begin position="549"/>
        <end position="558"/>
    </location>
</feature>
<feature type="helix" evidence="8">
    <location>
        <begin position="564"/>
        <end position="573"/>
    </location>
</feature>
<feature type="helix" evidence="8">
    <location>
        <begin position="582"/>
        <end position="589"/>
    </location>
</feature>
<feature type="helix" evidence="8">
    <location>
        <begin position="633"/>
        <end position="644"/>
    </location>
</feature>
<feature type="strand" evidence="8">
    <location>
        <begin position="647"/>
        <end position="649"/>
    </location>
</feature>
<feature type="strand" evidence="8">
    <location>
        <begin position="655"/>
        <end position="659"/>
    </location>
</feature>
<feature type="strand" evidence="8">
    <location>
        <begin position="661"/>
        <end position="669"/>
    </location>
</feature>
<feature type="strand" evidence="8">
    <location>
        <begin position="671"/>
        <end position="677"/>
    </location>
</feature>
<feature type="strand" evidence="8">
    <location>
        <begin position="680"/>
        <end position="683"/>
    </location>
</feature>
<feature type="strand" evidence="8">
    <location>
        <begin position="689"/>
        <end position="692"/>
    </location>
</feature>
<feature type="strand" evidence="8">
    <location>
        <begin position="694"/>
        <end position="701"/>
    </location>
</feature>
<organism>
    <name type="scientific">Saccharomyces cerevisiae (strain ATCC 204508 / S288c)</name>
    <name type="common">Baker's yeast</name>
    <dbReference type="NCBI Taxonomy" id="559292"/>
    <lineage>
        <taxon>Eukaryota</taxon>
        <taxon>Fungi</taxon>
        <taxon>Dikarya</taxon>
        <taxon>Ascomycota</taxon>
        <taxon>Saccharomycotina</taxon>
        <taxon>Saccharomycetes</taxon>
        <taxon>Saccharomycetales</taxon>
        <taxon>Saccharomycetaceae</taxon>
        <taxon>Saccharomyces</taxon>
    </lineage>
</organism>
<reference key="1">
    <citation type="journal article" date="1997" name="Nature">
        <title>The nucleotide sequence of Saccharomyces cerevisiae chromosome XII.</title>
        <authorList>
            <person name="Johnston M."/>
            <person name="Hillier L.W."/>
            <person name="Riles L."/>
            <person name="Albermann K."/>
            <person name="Andre B."/>
            <person name="Ansorge W."/>
            <person name="Benes V."/>
            <person name="Brueckner M."/>
            <person name="Delius H."/>
            <person name="Dubois E."/>
            <person name="Duesterhoeft A."/>
            <person name="Entian K.-D."/>
            <person name="Floeth M."/>
            <person name="Goffeau A."/>
            <person name="Hebling U."/>
            <person name="Heumann K."/>
            <person name="Heuss-Neitzel D."/>
            <person name="Hilbert H."/>
            <person name="Hilger F."/>
            <person name="Kleine K."/>
            <person name="Koetter P."/>
            <person name="Louis E.J."/>
            <person name="Messenguy F."/>
            <person name="Mewes H.-W."/>
            <person name="Miosga T."/>
            <person name="Moestl D."/>
            <person name="Mueller-Auer S."/>
            <person name="Nentwich U."/>
            <person name="Obermaier B."/>
            <person name="Piravandi E."/>
            <person name="Pohl T.M."/>
            <person name="Portetelle D."/>
            <person name="Purnelle B."/>
            <person name="Rechmann S."/>
            <person name="Rieger M."/>
            <person name="Rinke M."/>
            <person name="Rose M."/>
            <person name="Scharfe M."/>
            <person name="Scherens B."/>
            <person name="Scholler P."/>
            <person name="Schwager C."/>
            <person name="Schwarz S."/>
            <person name="Underwood A.P."/>
            <person name="Urrestarazu L.A."/>
            <person name="Vandenbol M."/>
            <person name="Verhasselt P."/>
            <person name="Vierendeels F."/>
            <person name="Voet M."/>
            <person name="Volckaert G."/>
            <person name="Voss H."/>
            <person name="Wambutt R."/>
            <person name="Wedler E."/>
            <person name="Wedler H."/>
            <person name="Zimmermann F.K."/>
            <person name="Zollner A."/>
            <person name="Hani J."/>
            <person name="Hoheisel J.D."/>
        </authorList>
    </citation>
    <scope>NUCLEOTIDE SEQUENCE [LARGE SCALE GENOMIC DNA]</scope>
    <source>
        <strain>ATCC 204508 / S288c</strain>
    </source>
</reference>
<reference key="2">
    <citation type="journal article" date="2014" name="G3 (Bethesda)">
        <title>The reference genome sequence of Saccharomyces cerevisiae: Then and now.</title>
        <authorList>
            <person name="Engel S.R."/>
            <person name="Dietrich F.S."/>
            <person name="Fisk D.G."/>
            <person name="Binkley G."/>
            <person name="Balakrishnan R."/>
            <person name="Costanzo M.C."/>
            <person name="Dwight S.S."/>
            <person name="Hitz B.C."/>
            <person name="Karra K."/>
            <person name="Nash R.S."/>
            <person name="Weng S."/>
            <person name="Wong E.D."/>
            <person name="Lloyd P."/>
            <person name="Skrzypek M.S."/>
            <person name="Miyasato S.R."/>
            <person name="Simison M."/>
            <person name="Cherry J.M."/>
        </authorList>
    </citation>
    <scope>GENOME REANNOTATION</scope>
    <source>
        <strain>ATCC 204508 / S288c</strain>
    </source>
</reference>
<reference key="3">
    <citation type="journal article" date="2003" name="J. Biol. Chem.">
        <title>The Clf1p splicing factor promotes spliceosome assembly through N-terminal tetratricopeptide repeat contacts.</title>
        <authorList>
            <person name="Wang Q."/>
            <person name="Hobbs K."/>
            <person name="Lynn B."/>
            <person name="Rymond B.C."/>
        </authorList>
    </citation>
    <scope>INTERACTION WITH CLF1</scope>
</reference>
<reference key="4">
    <citation type="journal article" date="2003" name="Mol. Cell">
        <title>Assigning function to yeast proteins by integration of technologies.</title>
        <authorList>
            <person name="Hazbun T.R."/>
            <person name="Malmstroem L."/>
            <person name="Anderson S."/>
            <person name="Graczyk B.J."/>
            <person name="Fox B."/>
            <person name="Riffle M."/>
            <person name="Sundin B.A."/>
            <person name="Aranda J.D."/>
            <person name="McDonald W.H."/>
            <person name="Chiu C.-H."/>
            <person name="Snydsman B.E."/>
            <person name="Bradley P."/>
            <person name="Muller E.G.D."/>
            <person name="Fields S."/>
            <person name="Baker D."/>
            <person name="Yates J.R. III"/>
            <person name="Davis T.N."/>
        </authorList>
    </citation>
    <scope>IDENTIFICATION BY MASS SPECTROMETRY</scope>
    <scope>INTERACTION WITH PRP43 AND PRP45</scope>
</reference>
<reference key="5">
    <citation type="journal article" date="2003" name="Nature">
        <title>Global analysis of protein localization in budding yeast.</title>
        <authorList>
            <person name="Huh W.-K."/>
            <person name="Falvo J.V."/>
            <person name="Gerke L.C."/>
            <person name="Carroll A.S."/>
            <person name="Howson R.W."/>
            <person name="Weissman J.S."/>
            <person name="O'Shea E.K."/>
        </authorList>
    </citation>
    <scope>SUBCELLULAR LOCATION [LARGE SCALE ANALYSIS]</scope>
</reference>
<reference key="6">
    <citation type="journal article" date="2003" name="Nature">
        <title>Global analysis of protein expression in yeast.</title>
        <authorList>
            <person name="Ghaemmaghami S."/>
            <person name="Huh W.-K."/>
            <person name="Bower K."/>
            <person name="Howson R.W."/>
            <person name="Belle A."/>
            <person name="Dephoure N."/>
            <person name="O'Shea E.K."/>
            <person name="Weissman J.S."/>
        </authorList>
    </citation>
    <scope>LEVEL OF PROTEIN EXPRESSION [LARGE SCALE ANALYSIS]</scope>
</reference>
<reference key="7">
    <citation type="journal article" date="2005" name="Genes Dev.">
        <title>Spliceosome disassembly catalyzed by Prp43 and its associated components Ntr1 and Ntr2.</title>
        <authorList>
            <person name="Tsai R.-T."/>
            <person name="Fu R.-H."/>
            <person name="Yeh F.-L."/>
            <person name="Tseng C.-K."/>
            <person name="Lin Y.-C."/>
            <person name="Huang Y.-H."/>
            <person name="Cheng S.-C."/>
        </authorList>
    </citation>
    <scope>FUNCTION</scope>
    <scope>IDENTIFICATION IN THE NTC-RELATED COMPLEX</scope>
    <scope>INTERACTION WITH CLF1; NTR2 AND PRP43</scope>
</reference>
<reference key="8">
    <citation type="journal article" date="2006" name="Mol. Cell. Biol.">
        <title>Yeast ntr1/spp382 mediates prp43 function in postspliceosomes.</title>
        <authorList>
            <person name="Boon K.-L."/>
            <person name="Auchynnikava T."/>
            <person name="Edwalds-Gilbert G."/>
            <person name="Barrass J.D."/>
            <person name="Droop A.P."/>
            <person name="Dez C."/>
            <person name="Beggs J.D."/>
        </authorList>
    </citation>
    <scope>FUNCTION</scope>
    <scope>INTERACTION WITH NTR2 AND PRP43</scope>
</reference>
<accession>Q06411</accession>
<accession>D6VZ60</accession>
<protein>
    <recommendedName>
        <fullName>Pre-mRNA-splicing factor SPP382</fullName>
    </recommendedName>
    <alternativeName>
        <fullName>CLF1 complex factor 8</fullName>
    </alternativeName>
    <alternativeName>
        <fullName>Nineteen complex-related protein 1</fullName>
        <shortName>NTC-related protein 1</shortName>
    </alternativeName>
    <alternativeName>
        <fullName>Suppressor of PRP38 protein 2</fullName>
    </alternativeName>
</protein>
<proteinExistence type="evidence at protein level"/>
<gene>
    <name type="primary">SPP382</name>
    <name type="synonym">CCF8</name>
    <name type="synonym">NTR1</name>
    <name type="ordered locus">YLR424W</name>
</gene>